<gene>
    <name type="primary">hisC1</name>
    <name type="ordered locus">BC_1518</name>
</gene>
<name>HIS81_BACCR</name>
<accession>Q81FQ1</accession>
<reference key="1">
    <citation type="journal article" date="2003" name="Nature">
        <title>Genome sequence of Bacillus cereus and comparative analysis with Bacillus anthracis.</title>
        <authorList>
            <person name="Ivanova N."/>
            <person name="Sorokin A."/>
            <person name="Anderson I."/>
            <person name="Galleron N."/>
            <person name="Candelon B."/>
            <person name="Kapatral V."/>
            <person name="Bhattacharyya A."/>
            <person name="Reznik G."/>
            <person name="Mikhailova N."/>
            <person name="Lapidus A."/>
            <person name="Chu L."/>
            <person name="Mazur M."/>
            <person name="Goltsman E."/>
            <person name="Larsen N."/>
            <person name="D'Souza M."/>
            <person name="Walunas T."/>
            <person name="Grechkin Y."/>
            <person name="Pusch G."/>
            <person name="Haselkorn R."/>
            <person name="Fonstein M."/>
            <person name="Ehrlich S.D."/>
            <person name="Overbeek R."/>
            <person name="Kyrpides N.C."/>
        </authorList>
    </citation>
    <scope>NUCLEOTIDE SEQUENCE [LARGE SCALE GENOMIC DNA]</scope>
    <source>
        <strain>ATCC 14579 / DSM 31 / CCUG 7414 / JCM 2152 / NBRC 15305 / NCIMB 9373 / NCTC 2599 / NRRL B-3711</strain>
    </source>
</reference>
<organism>
    <name type="scientific">Bacillus cereus (strain ATCC 14579 / DSM 31 / CCUG 7414 / JCM 2152 / NBRC 15305 / NCIMB 9373 / NCTC 2599 / NRRL B-3711)</name>
    <dbReference type="NCBI Taxonomy" id="226900"/>
    <lineage>
        <taxon>Bacteria</taxon>
        <taxon>Bacillati</taxon>
        <taxon>Bacillota</taxon>
        <taxon>Bacilli</taxon>
        <taxon>Bacillales</taxon>
        <taxon>Bacillaceae</taxon>
        <taxon>Bacillus</taxon>
        <taxon>Bacillus cereus group</taxon>
    </lineage>
</organism>
<proteinExistence type="inferred from homology"/>
<sequence length="370" mass="41620">MRVKEQLLTLRAYVPGKNIEEVKREYGLSKIVKLASNENPFGCSARVTEALTSLASQYALYPDGYAFELRTKIAEHLGVKAEQLLFGSGLDEVIQMISRALLHEGTNVVMANPTFSQYHHHAVIEGAEVREVSLKDGIHDLDAMLEQVDEKTKIVWICNPNNPTGTYVEKQKLLSFLESVPKSALVIMDEAYYEYAEAEDYPQTLPLLEKYENLMVLRTFSKAYGLAAFRIGYAIGDAKLIGQLEVARLPFNTSTVAQSVALAALEDQAFLQDCVQKNAEGLNQYYAFCKEYNVFYYPSQTNFIFLKLGIPGNEAFERLMKKGYIVRSGAAFGIDDGIRITVGLKEENDEIIELLKELVNEQVQKEETYS</sequence>
<keyword id="KW-0028">Amino-acid biosynthesis</keyword>
<keyword id="KW-0032">Aminotransferase</keyword>
<keyword id="KW-0368">Histidine biosynthesis</keyword>
<keyword id="KW-0663">Pyridoxal phosphate</keyword>
<keyword id="KW-1185">Reference proteome</keyword>
<keyword id="KW-0808">Transferase</keyword>
<feature type="chain" id="PRO_0000153301" description="Histidinol-phosphate aminotransferase 1">
    <location>
        <begin position="1"/>
        <end position="370"/>
    </location>
</feature>
<feature type="modified residue" description="N6-(pyridoxal phosphate)lysine" evidence="1">
    <location>
        <position position="222"/>
    </location>
</feature>
<protein>
    <recommendedName>
        <fullName>Histidinol-phosphate aminotransferase 1</fullName>
        <ecNumber>2.6.1.9</ecNumber>
    </recommendedName>
    <alternativeName>
        <fullName>Imidazole acetol-phosphate transaminase 1</fullName>
    </alternativeName>
</protein>
<dbReference type="EC" id="2.6.1.9"/>
<dbReference type="EMBL" id="AE016877">
    <property type="protein sequence ID" value="AAP08498.1"/>
    <property type="molecule type" value="Genomic_DNA"/>
</dbReference>
<dbReference type="RefSeq" id="NP_831297.1">
    <property type="nucleotide sequence ID" value="NC_004722.1"/>
</dbReference>
<dbReference type="SMR" id="Q81FQ1"/>
<dbReference type="STRING" id="226900.BC_1518"/>
<dbReference type="KEGG" id="bce:BC1518"/>
<dbReference type="PATRIC" id="fig|226900.8.peg.1495"/>
<dbReference type="HOGENOM" id="CLU_017584_3_3_9"/>
<dbReference type="OrthoDB" id="9813612at2"/>
<dbReference type="UniPathway" id="UPA00031">
    <property type="reaction ID" value="UER00012"/>
</dbReference>
<dbReference type="Proteomes" id="UP000001417">
    <property type="component" value="Chromosome"/>
</dbReference>
<dbReference type="GO" id="GO:0004400">
    <property type="term" value="F:histidinol-phosphate transaminase activity"/>
    <property type="evidence" value="ECO:0007669"/>
    <property type="project" value="UniProtKB-UniRule"/>
</dbReference>
<dbReference type="GO" id="GO:0030170">
    <property type="term" value="F:pyridoxal phosphate binding"/>
    <property type="evidence" value="ECO:0007669"/>
    <property type="project" value="InterPro"/>
</dbReference>
<dbReference type="GO" id="GO:0000105">
    <property type="term" value="P:L-histidine biosynthetic process"/>
    <property type="evidence" value="ECO:0007669"/>
    <property type="project" value="UniProtKB-UniRule"/>
</dbReference>
<dbReference type="CDD" id="cd00609">
    <property type="entry name" value="AAT_like"/>
    <property type="match status" value="1"/>
</dbReference>
<dbReference type="Gene3D" id="3.90.1150.10">
    <property type="entry name" value="Aspartate Aminotransferase, domain 1"/>
    <property type="match status" value="1"/>
</dbReference>
<dbReference type="Gene3D" id="3.40.640.10">
    <property type="entry name" value="Type I PLP-dependent aspartate aminotransferase-like (Major domain)"/>
    <property type="match status" value="1"/>
</dbReference>
<dbReference type="HAMAP" id="MF_01023">
    <property type="entry name" value="HisC_aminotrans_2"/>
    <property type="match status" value="1"/>
</dbReference>
<dbReference type="InterPro" id="IPR001917">
    <property type="entry name" value="Aminotrans_II_pyridoxalP_BS"/>
</dbReference>
<dbReference type="InterPro" id="IPR004839">
    <property type="entry name" value="Aminotransferase_I/II_large"/>
</dbReference>
<dbReference type="InterPro" id="IPR005861">
    <property type="entry name" value="HisP_aminotrans"/>
</dbReference>
<dbReference type="InterPro" id="IPR050106">
    <property type="entry name" value="HistidinolP_aminotransfase"/>
</dbReference>
<dbReference type="InterPro" id="IPR015424">
    <property type="entry name" value="PyrdxlP-dep_Trfase"/>
</dbReference>
<dbReference type="InterPro" id="IPR015421">
    <property type="entry name" value="PyrdxlP-dep_Trfase_major"/>
</dbReference>
<dbReference type="InterPro" id="IPR015422">
    <property type="entry name" value="PyrdxlP-dep_Trfase_small"/>
</dbReference>
<dbReference type="NCBIfam" id="TIGR01141">
    <property type="entry name" value="hisC"/>
    <property type="match status" value="1"/>
</dbReference>
<dbReference type="PANTHER" id="PTHR43643:SF3">
    <property type="entry name" value="HISTIDINOL-PHOSPHATE AMINOTRANSFERASE"/>
    <property type="match status" value="1"/>
</dbReference>
<dbReference type="PANTHER" id="PTHR43643">
    <property type="entry name" value="HISTIDINOL-PHOSPHATE AMINOTRANSFERASE 2"/>
    <property type="match status" value="1"/>
</dbReference>
<dbReference type="Pfam" id="PF00155">
    <property type="entry name" value="Aminotran_1_2"/>
    <property type="match status" value="1"/>
</dbReference>
<dbReference type="SUPFAM" id="SSF53383">
    <property type="entry name" value="PLP-dependent transferases"/>
    <property type="match status" value="1"/>
</dbReference>
<dbReference type="PROSITE" id="PS00599">
    <property type="entry name" value="AA_TRANSFER_CLASS_2"/>
    <property type="match status" value="1"/>
</dbReference>
<comment type="catalytic activity">
    <reaction>
        <text>L-histidinol phosphate + 2-oxoglutarate = 3-(imidazol-4-yl)-2-oxopropyl phosphate + L-glutamate</text>
        <dbReference type="Rhea" id="RHEA:23744"/>
        <dbReference type="ChEBI" id="CHEBI:16810"/>
        <dbReference type="ChEBI" id="CHEBI:29985"/>
        <dbReference type="ChEBI" id="CHEBI:57766"/>
        <dbReference type="ChEBI" id="CHEBI:57980"/>
        <dbReference type="EC" id="2.6.1.9"/>
    </reaction>
</comment>
<comment type="cofactor">
    <cofactor evidence="1">
        <name>pyridoxal 5'-phosphate</name>
        <dbReference type="ChEBI" id="CHEBI:597326"/>
    </cofactor>
</comment>
<comment type="pathway">
    <text>Amino-acid biosynthesis; L-histidine biosynthesis; L-histidine from 5-phospho-alpha-D-ribose 1-diphosphate: step 7/9.</text>
</comment>
<comment type="subunit">
    <text evidence="1">Homodimer.</text>
</comment>
<comment type="similarity">
    <text evidence="2">Belongs to the class-II pyridoxal-phosphate-dependent aminotransferase family. Histidinol-phosphate aminotransferase subfamily.</text>
</comment>
<evidence type="ECO:0000250" key="1"/>
<evidence type="ECO:0000305" key="2"/>